<evidence type="ECO:0000255" key="1">
    <source>
        <dbReference type="HAMAP-Rule" id="MF_00605"/>
    </source>
</evidence>
<organism>
    <name type="scientific">Alkaliphilus metalliredigens (strain QYMF)</name>
    <dbReference type="NCBI Taxonomy" id="293826"/>
    <lineage>
        <taxon>Bacteria</taxon>
        <taxon>Bacillati</taxon>
        <taxon>Bacillota</taxon>
        <taxon>Clostridia</taxon>
        <taxon>Peptostreptococcales</taxon>
        <taxon>Natronincolaceae</taxon>
        <taxon>Alkaliphilus</taxon>
    </lineage>
</organism>
<protein>
    <recommendedName>
        <fullName evidence="1">tRNA (guanine-N(1)-)-methyltransferase</fullName>
        <ecNumber evidence="1">2.1.1.228</ecNumber>
    </recommendedName>
    <alternativeName>
        <fullName evidence="1">M1G-methyltransferase</fullName>
    </alternativeName>
    <alternativeName>
        <fullName evidence="1">tRNA [GM37] methyltransferase</fullName>
    </alternativeName>
</protein>
<comment type="function">
    <text evidence="1">Specifically methylates guanosine-37 in various tRNAs.</text>
</comment>
<comment type="catalytic activity">
    <reaction evidence="1">
        <text>guanosine(37) in tRNA + S-adenosyl-L-methionine = N(1)-methylguanosine(37) in tRNA + S-adenosyl-L-homocysteine + H(+)</text>
        <dbReference type="Rhea" id="RHEA:36899"/>
        <dbReference type="Rhea" id="RHEA-COMP:10145"/>
        <dbReference type="Rhea" id="RHEA-COMP:10147"/>
        <dbReference type="ChEBI" id="CHEBI:15378"/>
        <dbReference type="ChEBI" id="CHEBI:57856"/>
        <dbReference type="ChEBI" id="CHEBI:59789"/>
        <dbReference type="ChEBI" id="CHEBI:73542"/>
        <dbReference type="ChEBI" id="CHEBI:74269"/>
        <dbReference type="EC" id="2.1.1.228"/>
    </reaction>
</comment>
<comment type="subunit">
    <text evidence="1">Homodimer.</text>
</comment>
<comment type="subcellular location">
    <subcellularLocation>
        <location evidence="1">Cytoplasm</location>
    </subcellularLocation>
</comment>
<comment type="similarity">
    <text evidence="1">Belongs to the RNA methyltransferase TrmD family.</text>
</comment>
<name>TRMD_ALKMQ</name>
<reference key="1">
    <citation type="journal article" date="2016" name="Genome Announc.">
        <title>Complete genome sequence of Alkaliphilus metalliredigens strain QYMF, an alkaliphilic and metal-reducing bacterium isolated from borax-contaminated leachate ponds.</title>
        <authorList>
            <person name="Hwang C."/>
            <person name="Copeland A."/>
            <person name="Lucas S."/>
            <person name="Lapidus A."/>
            <person name="Barry K."/>
            <person name="Detter J.C."/>
            <person name="Glavina Del Rio T."/>
            <person name="Hammon N."/>
            <person name="Israni S."/>
            <person name="Dalin E."/>
            <person name="Tice H."/>
            <person name="Pitluck S."/>
            <person name="Chertkov O."/>
            <person name="Brettin T."/>
            <person name="Bruce D."/>
            <person name="Han C."/>
            <person name="Schmutz J."/>
            <person name="Larimer F."/>
            <person name="Land M.L."/>
            <person name="Hauser L."/>
            <person name="Kyrpides N."/>
            <person name="Mikhailova N."/>
            <person name="Ye Q."/>
            <person name="Zhou J."/>
            <person name="Richardson P."/>
            <person name="Fields M.W."/>
        </authorList>
    </citation>
    <scope>NUCLEOTIDE SEQUENCE [LARGE SCALE GENOMIC DNA]</scope>
    <source>
        <strain>QYMF</strain>
    </source>
</reference>
<keyword id="KW-0963">Cytoplasm</keyword>
<keyword id="KW-0489">Methyltransferase</keyword>
<keyword id="KW-1185">Reference proteome</keyword>
<keyword id="KW-0949">S-adenosyl-L-methionine</keyword>
<keyword id="KW-0808">Transferase</keyword>
<keyword id="KW-0819">tRNA processing</keyword>
<feature type="chain" id="PRO_1000061266" description="tRNA (guanine-N(1)-)-methyltransferase">
    <location>
        <begin position="1"/>
        <end position="247"/>
    </location>
</feature>
<feature type="binding site" evidence="1">
    <location>
        <position position="115"/>
    </location>
    <ligand>
        <name>S-adenosyl-L-methionine</name>
        <dbReference type="ChEBI" id="CHEBI:59789"/>
    </ligand>
</feature>
<feature type="binding site" evidence="1">
    <location>
        <begin position="135"/>
        <end position="140"/>
    </location>
    <ligand>
        <name>S-adenosyl-L-methionine</name>
        <dbReference type="ChEBI" id="CHEBI:59789"/>
    </ligand>
</feature>
<sequence>MKVRILTLFPEMFNGPFGTSILKKAQEKELIDIQCFNIRDFALNKHKKVDDYPFGGGAGMVMTPQPIFDCHHHVTQMLNLNEPCKTIYLSPKGSTFTQEKAMELAKEEQLIFLCGHYEGIDQRIIDELVTDEISIGDYVLTGGELPAMVIVDAITRLIPGVLSTEASYEDESFHCGLLEYPHYTRPRAFNGLEVPSVLLSGNHKDIDMWRRKQSIELTFERRPDLLKGLQLKKNEAQWVAELSKKKE</sequence>
<dbReference type="EC" id="2.1.1.228" evidence="1"/>
<dbReference type="EMBL" id="CP000724">
    <property type="protein sequence ID" value="ABR48894.1"/>
    <property type="molecule type" value="Genomic_DNA"/>
</dbReference>
<dbReference type="RefSeq" id="WP_012063866.1">
    <property type="nucleotide sequence ID" value="NC_009633.1"/>
</dbReference>
<dbReference type="SMR" id="A6TRS6"/>
<dbReference type="STRING" id="293826.Amet_2743"/>
<dbReference type="KEGG" id="amt:Amet_2743"/>
<dbReference type="eggNOG" id="COG0336">
    <property type="taxonomic scope" value="Bacteria"/>
</dbReference>
<dbReference type="HOGENOM" id="CLU_047363_0_1_9"/>
<dbReference type="OrthoDB" id="9807416at2"/>
<dbReference type="Proteomes" id="UP000001572">
    <property type="component" value="Chromosome"/>
</dbReference>
<dbReference type="GO" id="GO:0005829">
    <property type="term" value="C:cytosol"/>
    <property type="evidence" value="ECO:0007669"/>
    <property type="project" value="TreeGrafter"/>
</dbReference>
<dbReference type="GO" id="GO:0052906">
    <property type="term" value="F:tRNA (guanine(37)-N1)-methyltransferase activity"/>
    <property type="evidence" value="ECO:0007669"/>
    <property type="project" value="UniProtKB-UniRule"/>
</dbReference>
<dbReference type="GO" id="GO:0002939">
    <property type="term" value="P:tRNA N1-guanine methylation"/>
    <property type="evidence" value="ECO:0007669"/>
    <property type="project" value="TreeGrafter"/>
</dbReference>
<dbReference type="CDD" id="cd18080">
    <property type="entry name" value="TrmD-like"/>
    <property type="match status" value="1"/>
</dbReference>
<dbReference type="FunFam" id="1.10.1270.20:FF:000001">
    <property type="entry name" value="tRNA (guanine-N(1)-)-methyltransferase"/>
    <property type="match status" value="1"/>
</dbReference>
<dbReference type="FunFam" id="3.40.1280.10:FF:000001">
    <property type="entry name" value="tRNA (guanine-N(1)-)-methyltransferase"/>
    <property type="match status" value="1"/>
</dbReference>
<dbReference type="Gene3D" id="3.40.1280.10">
    <property type="match status" value="1"/>
</dbReference>
<dbReference type="Gene3D" id="1.10.1270.20">
    <property type="entry name" value="tRNA(m1g37)methyltransferase, domain 2"/>
    <property type="match status" value="1"/>
</dbReference>
<dbReference type="HAMAP" id="MF_00605">
    <property type="entry name" value="TrmD"/>
    <property type="match status" value="1"/>
</dbReference>
<dbReference type="InterPro" id="IPR029028">
    <property type="entry name" value="Alpha/beta_knot_MTases"/>
</dbReference>
<dbReference type="InterPro" id="IPR023148">
    <property type="entry name" value="tRNA_m1G_MeTrfase_C_sf"/>
</dbReference>
<dbReference type="InterPro" id="IPR002649">
    <property type="entry name" value="tRNA_m1G_MeTrfase_TrmD"/>
</dbReference>
<dbReference type="InterPro" id="IPR029026">
    <property type="entry name" value="tRNA_m1G_MTases_N"/>
</dbReference>
<dbReference type="InterPro" id="IPR016009">
    <property type="entry name" value="tRNA_MeTrfase_TRMD/TRM10"/>
</dbReference>
<dbReference type="NCBIfam" id="NF000648">
    <property type="entry name" value="PRK00026.1"/>
    <property type="match status" value="1"/>
</dbReference>
<dbReference type="NCBIfam" id="TIGR00088">
    <property type="entry name" value="trmD"/>
    <property type="match status" value="1"/>
</dbReference>
<dbReference type="PANTHER" id="PTHR46417">
    <property type="entry name" value="TRNA (GUANINE-N(1)-)-METHYLTRANSFERASE"/>
    <property type="match status" value="1"/>
</dbReference>
<dbReference type="PANTHER" id="PTHR46417:SF1">
    <property type="entry name" value="TRNA (GUANINE-N(1)-)-METHYLTRANSFERASE"/>
    <property type="match status" value="1"/>
</dbReference>
<dbReference type="Pfam" id="PF01746">
    <property type="entry name" value="tRNA_m1G_MT"/>
    <property type="match status" value="1"/>
</dbReference>
<dbReference type="PIRSF" id="PIRSF000386">
    <property type="entry name" value="tRNA_mtase"/>
    <property type="match status" value="1"/>
</dbReference>
<dbReference type="SUPFAM" id="SSF75217">
    <property type="entry name" value="alpha/beta knot"/>
    <property type="match status" value="1"/>
</dbReference>
<proteinExistence type="inferred from homology"/>
<gene>
    <name evidence="1" type="primary">trmD</name>
    <name type="ordered locus">Amet_2743</name>
</gene>
<accession>A6TRS6</accession>